<feature type="chain" id="PRO_1000140672" description="Small ribosomal subunit protein uS4">
    <location>
        <begin position="1"/>
        <end position="208"/>
    </location>
</feature>
<feature type="domain" description="S4 RNA-binding" evidence="1">
    <location>
        <begin position="98"/>
        <end position="160"/>
    </location>
</feature>
<feature type="region of interest" description="Disordered" evidence="2">
    <location>
        <begin position="24"/>
        <end position="52"/>
    </location>
</feature>
<gene>
    <name evidence="1" type="primary">rpsD</name>
    <name type="ordered locus">ABAYE0432</name>
</gene>
<dbReference type="EMBL" id="CU459141">
    <property type="protein sequence ID" value="CAM85406.1"/>
    <property type="molecule type" value="Genomic_DNA"/>
</dbReference>
<dbReference type="RefSeq" id="WP_000135204.1">
    <property type="nucleotide sequence ID" value="NZ_JBDGFB010000011.1"/>
</dbReference>
<dbReference type="SMR" id="B0V6U6"/>
<dbReference type="EnsemblBacteria" id="CAM85406">
    <property type="protein sequence ID" value="CAM85406"/>
    <property type="gene ID" value="ABAYE0432"/>
</dbReference>
<dbReference type="GeneID" id="92895293"/>
<dbReference type="KEGG" id="aby:ABAYE0432"/>
<dbReference type="HOGENOM" id="CLU_092403_0_2_6"/>
<dbReference type="GO" id="GO:0015935">
    <property type="term" value="C:small ribosomal subunit"/>
    <property type="evidence" value="ECO:0007669"/>
    <property type="project" value="InterPro"/>
</dbReference>
<dbReference type="GO" id="GO:0019843">
    <property type="term" value="F:rRNA binding"/>
    <property type="evidence" value="ECO:0007669"/>
    <property type="project" value="UniProtKB-UniRule"/>
</dbReference>
<dbReference type="GO" id="GO:0003735">
    <property type="term" value="F:structural constituent of ribosome"/>
    <property type="evidence" value="ECO:0007669"/>
    <property type="project" value="InterPro"/>
</dbReference>
<dbReference type="GO" id="GO:0042274">
    <property type="term" value="P:ribosomal small subunit biogenesis"/>
    <property type="evidence" value="ECO:0007669"/>
    <property type="project" value="TreeGrafter"/>
</dbReference>
<dbReference type="GO" id="GO:0006412">
    <property type="term" value="P:translation"/>
    <property type="evidence" value="ECO:0007669"/>
    <property type="project" value="UniProtKB-UniRule"/>
</dbReference>
<dbReference type="CDD" id="cd00165">
    <property type="entry name" value="S4"/>
    <property type="match status" value="1"/>
</dbReference>
<dbReference type="FunFam" id="1.10.1050.10:FF:000001">
    <property type="entry name" value="30S ribosomal protein S4"/>
    <property type="match status" value="1"/>
</dbReference>
<dbReference type="FunFam" id="3.10.290.10:FF:000001">
    <property type="entry name" value="30S ribosomal protein S4"/>
    <property type="match status" value="1"/>
</dbReference>
<dbReference type="Gene3D" id="1.10.1050.10">
    <property type="entry name" value="Ribosomal Protein S4 Delta 41, Chain A, domain 1"/>
    <property type="match status" value="1"/>
</dbReference>
<dbReference type="Gene3D" id="3.10.290.10">
    <property type="entry name" value="RNA-binding S4 domain"/>
    <property type="match status" value="1"/>
</dbReference>
<dbReference type="HAMAP" id="MF_01306_B">
    <property type="entry name" value="Ribosomal_uS4_B"/>
    <property type="match status" value="1"/>
</dbReference>
<dbReference type="InterPro" id="IPR022801">
    <property type="entry name" value="Ribosomal_uS4"/>
</dbReference>
<dbReference type="InterPro" id="IPR005709">
    <property type="entry name" value="Ribosomal_uS4_bac-type"/>
</dbReference>
<dbReference type="InterPro" id="IPR018079">
    <property type="entry name" value="Ribosomal_uS4_CS"/>
</dbReference>
<dbReference type="InterPro" id="IPR001912">
    <property type="entry name" value="Ribosomal_uS4_N"/>
</dbReference>
<dbReference type="InterPro" id="IPR002942">
    <property type="entry name" value="S4_RNA-bd"/>
</dbReference>
<dbReference type="InterPro" id="IPR036986">
    <property type="entry name" value="S4_RNA-bd_sf"/>
</dbReference>
<dbReference type="NCBIfam" id="NF003717">
    <property type="entry name" value="PRK05327.1"/>
    <property type="match status" value="1"/>
</dbReference>
<dbReference type="NCBIfam" id="TIGR01017">
    <property type="entry name" value="rpsD_bact"/>
    <property type="match status" value="1"/>
</dbReference>
<dbReference type="PANTHER" id="PTHR11831">
    <property type="entry name" value="30S 40S RIBOSOMAL PROTEIN"/>
    <property type="match status" value="1"/>
</dbReference>
<dbReference type="PANTHER" id="PTHR11831:SF4">
    <property type="entry name" value="SMALL RIBOSOMAL SUBUNIT PROTEIN US4M"/>
    <property type="match status" value="1"/>
</dbReference>
<dbReference type="Pfam" id="PF00163">
    <property type="entry name" value="Ribosomal_S4"/>
    <property type="match status" value="1"/>
</dbReference>
<dbReference type="Pfam" id="PF01479">
    <property type="entry name" value="S4"/>
    <property type="match status" value="1"/>
</dbReference>
<dbReference type="SMART" id="SM01390">
    <property type="entry name" value="Ribosomal_S4"/>
    <property type="match status" value="1"/>
</dbReference>
<dbReference type="SMART" id="SM00363">
    <property type="entry name" value="S4"/>
    <property type="match status" value="1"/>
</dbReference>
<dbReference type="SUPFAM" id="SSF55174">
    <property type="entry name" value="Alpha-L RNA-binding motif"/>
    <property type="match status" value="1"/>
</dbReference>
<dbReference type="PROSITE" id="PS00632">
    <property type="entry name" value="RIBOSOMAL_S4"/>
    <property type="match status" value="1"/>
</dbReference>
<dbReference type="PROSITE" id="PS50889">
    <property type="entry name" value="S4"/>
    <property type="match status" value="1"/>
</dbReference>
<proteinExistence type="inferred from homology"/>
<evidence type="ECO:0000255" key="1">
    <source>
        <dbReference type="HAMAP-Rule" id="MF_01306"/>
    </source>
</evidence>
<evidence type="ECO:0000256" key="2">
    <source>
        <dbReference type="SAM" id="MobiDB-lite"/>
    </source>
</evidence>
<evidence type="ECO:0000305" key="3"/>
<protein>
    <recommendedName>
        <fullName evidence="1">Small ribosomal subunit protein uS4</fullName>
    </recommendedName>
    <alternativeName>
        <fullName evidence="3">30S ribosomal protein S4</fullName>
    </alternativeName>
</protein>
<comment type="function">
    <text evidence="1">One of the primary rRNA binding proteins, it binds directly to 16S rRNA where it nucleates assembly of the body of the 30S subunit.</text>
</comment>
<comment type="function">
    <text evidence="1">With S5 and S12 plays an important role in translational accuracy.</text>
</comment>
<comment type="subunit">
    <text evidence="1">Part of the 30S ribosomal subunit. Contacts protein S5. The interaction surface between S4 and S5 is involved in control of translational fidelity.</text>
</comment>
<comment type="similarity">
    <text evidence="1">Belongs to the universal ribosomal protein uS4 family.</text>
</comment>
<organism>
    <name type="scientific">Acinetobacter baumannii (strain AYE)</name>
    <dbReference type="NCBI Taxonomy" id="509173"/>
    <lineage>
        <taxon>Bacteria</taxon>
        <taxon>Pseudomonadati</taxon>
        <taxon>Pseudomonadota</taxon>
        <taxon>Gammaproteobacteria</taxon>
        <taxon>Moraxellales</taxon>
        <taxon>Moraxellaceae</taxon>
        <taxon>Acinetobacter</taxon>
        <taxon>Acinetobacter calcoaceticus/baumannii complex</taxon>
    </lineage>
</organism>
<sequence length="208" mass="23269">MARYIGPKCKLSRREGTDLQLKSGVKPFDVKTKKANKAPGQHGQARGGKQSEYSLQLREKQKVRRIYGVLERQFSNYYKEAARVKGATGENLLKLLESRLDNVVYRMGFGSTRAEARQLVSHRSITLNGRRVNIASIQVKAGDVIAVHEGAKQQLRIKNAIELAAQRGIPAWIEVDHSKLEGTFKAAPDRSDLPAEINESLIVELYSK</sequence>
<keyword id="KW-0687">Ribonucleoprotein</keyword>
<keyword id="KW-0689">Ribosomal protein</keyword>
<keyword id="KW-0694">RNA-binding</keyword>
<keyword id="KW-0699">rRNA-binding</keyword>
<reference key="1">
    <citation type="journal article" date="2008" name="PLoS ONE">
        <title>Comparative analysis of Acinetobacters: three genomes for three lifestyles.</title>
        <authorList>
            <person name="Vallenet D."/>
            <person name="Nordmann P."/>
            <person name="Barbe V."/>
            <person name="Poirel L."/>
            <person name="Mangenot S."/>
            <person name="Bataille E."/>
            <person name="Dossat C."/>
            <person name="Gas S."/>
            <person name="Kreimeyer A."/>
            <person name="Lenoble P."/>
            <person name="Oztas S."/>
            <person name="Poulain J."/>
            <person name="Segurens B."/>
            <person name="Robert C."/>
            <person name="Abergel C."/>
            <person name="Claverie J.-M."/>
            <person name="Raoult D."/>
            <person name="Medigue C."/>
            <person name="Weissenbach J."/>
            <person name="Cruveiller S."/>
        </authorList>
    </citation>
    <scope>NUCLEOTIDE SEQUENCE [LARGE SCALE GENOMIC DNA]</scope>
    <source>
        <strain>AYE</strain>
    </source>
</reference>
<name>RS4_ACIBY</name>
<accession>B0V6U6</accession>